<accession>P03859</accession>
<feature type="chain" id="PRO_0000068520" description="Uncharacterized 12.4 kDa protein">
    <location>
        <begin position="1"/>
        <end position="102"/>
    </location>
</feature>
<dbReference type="EMBL" id="V01278">
    <property type="protein sequence ID" value="CAA24590.1"/>
    <property type="status" value="ALT_INIT"/>
    <property type="molecule type" value="Genomic_DNA"/>
</dbReference>
<dbReference type="PIR" id="A04488">
    <property type="entry name" value="QQSACE"/>
</dbReference>
<dbReference type="RefSeq" id="YP_025320.1">
    <property type="nucleotide sequence ID" value="NC_005908.1"/>
</dbReference>
<dbReference type="SMR" id="P03859"/>
<dbReference type="GO" id="GO:0005727">
    <property type="term" value="C:extrachromosomal circular DNA"/>
    <property type="evidence" value="ECO:0007669"/>
    <property type="project" value="InterPro"/>
</dbReference>
<dbReference type="GO" id="GO:0003677">
    <property type="term" value="F:DNA binding"/>
    <property type="evidence" value="ECO:0007669"/>
    <property type="project" value="InterPro"/>
</dbReference>
<dbReference type="GO" id="GO:0003916">
    <property type="term" value="F:DNA topoisomerase activity"/>
    <property type="evidence" value="ECO:0007669"/>
    <property type="project" value="InterPro"/>
</dbReference>
<dbReference type="GO" id="GO:0006260">
    <property type="term" value="P:DNA replication"/>
    <property type="evidence" value="ECO:0007669"/>
    <property type="project" value="InterPro"/>
</dbReference>
<dbReference type="InterPro" id="IPR002631">
    <property type="entry name" value="Plasmid_rep_OBD"/>
</dbReference>
<dbReference type="InterPro" id="IPR053923">
    <property type="entry name" value="RepB_C"/>
</dbReference>
<dbReference type="Pfam" id="PF01719">
    <property type="entry name" value="Rep_OBD"/>
    <property type="match status" value="1"/>
</dbReference>
<dbReference type="Pfam" id="PF21861">
    <property type="entry name" value="RepB_C"/>
    <property type="match status" value="1"/>
</dbReference>
<organism>
    <name type="scientific">Staphylococcus aureus</name>
    <dbReference type="NCBI Taxonomy" id="1280"/>
    <lineage>
        <taxon>Bacteria</taxon>
        <taxon>Bacillati</taxon>
        <taxon>Bacillota</taxon>
        <taxon>Bacilli</taxon>
        <taxon>Bacillales</taxon>
        <taxon>Staphylococcaceae</taxon>
        <taxon>Staphylococcus</taxon>
    </lineage>
</organism>
<comment type="similarity">
    <text evidence="1">Belongs to the Gram-positive plasmids replication protein type 2 family.</text>
</comment>
<comment type="sequence caution" evidence="1">
    <conflict type="erroneous initiation">
        <sequence resource="EMBL-CDS" id="CAA24590"/>
    </conflict>
</comment>
<geneLocation type="plasmid">
    <name>pE194</name>
</geneLocation>
<keyword id="KW-0614">Plasmid</keyword>
<proteinExistence type="inferred from homology"/>
<evidence type="ECO:0000305" key="1"/>
<protein>
    <recommendedName>
        <fullName>Uncharacterized 12.4 kDa protein</fullName>
    </recommendedName>
    <alternativeName>
        <fullName>Reading frame C</fullName>
    </alternativeName>
</protein>
<reference key="1">
    <citation type="journal article" date="1982" name="J. Bacteriol.">
        <title>Nucleotide sequence and functional map of pE194, a plasmid that specifies inducible resistance to macrolide, lincosamide, and streptogramin type B antibodies.</title>
        <authorList>
            <person name="Horinouchi S."/>
            <person name="Weisblum B."/>
        </authorList>
    </citation>
    <scope>NUCLEOTIDE SEQUENCE [GENOMIC DNA]</scope>
</reference>
<sequence>MKGLVRYMLHMDDPNKFKYQKEDMIVYGGVDVDELLKKTTTDRYKLIKEMIEFIDEQGIVEFKSLMDYAMKFKFDDWFPLLCDNSAYVIQEYIKSNRYKSDR</sequence>
<name>YP12_STAAU</name>